<feature type="chain" id="PRO_0000108979" description="UDP-N-acetylmuramoylalanine--D-glutamate ligase">
    <location>
        <begin position="1"/>
        <end position="451"/>
    </location>
</feature>
<feature type="binding site" evidence="2">
    <location>
        <begin position="118"/>
        <end position="124"/>
    </location>
    <ligand>
        <name>ATP</name>
        <dbReference type="ChEBI" id="CHEBI:30616"/>
    </ligand>
</feature>
<sequence>MLLDEIKNLNFLIMGLGLNGGGVALSRFLLKRGAKLVITDLKSETELALSIDALRDFEDQIRYVLGKHDVNDFKNADIVVKNPGVKPNNKYLKFAKRIETDISLFLMFNKNPIVAVTGTKGKSTLVSLLYQALKEKYPGVKLGGNIGVSPLSFFDQLDGKSPLILELSSWQLQSLENFNPIISIITNVYNDHQNYYLNFDDYIIDKSKIFVNQTSGIVIIQDQAYCKYFSKFKSKVRVILFSEFNPCDFDQDIFYCNEGKVYFNDSLIGSFSNSRAVFIIPKVITFFVSYYLNIDLNRTGQILSNFKGIEHRLEFVKSVQNVMFYNDTASTIPESTVLSVKSLKTKDNRINLIVGGTDKELDFLSFSKIADIVRTWILIRGSATVKIIKILEKSSIQYFLFDSLRDAVNYAFKISSPGDIVLFSPASASFELFNNEFDRGLQFKNLVNNLG</sequence>
<name>MURD_BORBU</name>
<protein>
    <recommendedName>
        <fullName>UDP-N-acetylmuramoylalanine--D-glutamate ligase</fullName>
        <ecNumber>6.3.2.9</ecNumber>
    </recommendedName>
    <alternativeName>
        <fullName>D-glutamic acid-adding enzyme</fullName>
    </alternativeName>
    <alternativeName>
        <fullName>UDP-N-acetylmuramoyl-L-alanyl-D-glutamate synthetase</fullName>
    </alternativeName>
</protein>
<accession>O51532</accession>
<evidence type="ECO:0000250" key="1"/>
<evidence type="ECO:0000255" key="2"/>
<evidence type="ECO:0000305" key="3"/>
<proteinExistence type="inferred from homology"/>
<organism>
    <name type="scientific">Borreliella burgdorferi (strain ATCC 35210 / DSM 4680 / CIP 102532 / B31)</name>
    <name type="common">Borrelia burgdorferi</name>
    <dbReference type="NCBI Taxonomy" id="224326"/>
    <lineage>
        <taxon>Bacteria</taxon>
        <taxon>Pseudomonadati</taxon>
        <taxon>Spirochaetota</taxon>
        <taxon>Spirochaetia</taxon>
        <taxon>Spirochaetales</taxon>
        <taxon>Borreliaceae</taxon>
        <taxon>Borreliella</taxon>
    </lineage>
</organism>
<keyword id="KW-0067">ATP-binding</keyword>
<keyword id="KW-0131">Cell cycle</keyword>
<keyword id="KW-0132">Cell division</keyword>
<keyword id="KW-0133">Cell shape</keyword>
<keyword id="KW-0961">Cell wall biogenesis/degradation</keyword>
<keyword id="KW-0963">Cytoplasm</keyword>
<keyword id="KW-0436">Ligase</keyword>
<keyword id="KW-0547">Nucleotide-binding</keyword>
<keyword id="KW-0573">Peptidoglycan synthesis</keyword>
<keyword id="KW-1185">Reference proteome</keyword>
<dbReference type="EC" id="6.3.2.9"/>
<dbReference type="EMBL" id="AE000783">
    <property type="protein sequence ID" value="AAB91522.1"/>
    <property type="molecule type" value="Genomic_DNA"/>
</dbReference>
<dbReference type="PIR" id="H70172">
    <property type="entry name" value="H70172"/>
</dbReference>
<dbReference type="RefSeq" id="NP_212719.1">
    <property type="nucleotide sequence ID" value="NC_001318.1"/>
</dbReference>
<dbReference type="RefSeq" id="WP_010889771.1">
    <property type="nucleotide sequence ID" value="NC_001318.1"/>
</dbReference>
<dbReference type="SMR" id="O51532"/>
<dbReference type="STRING" id="224326.BB_0585"/>
<dbReference type="PaxDb" id="224326-BB_0585"/>
<dbReference type="EnsemblBacteria" id="AAB91522">
    <property type="protein sequence ID" value="AAB91522"/>
    <property type="gene ID" value="BB_0585"/>
</dbReference>
<dbReference type="KEGG" id="bbu:BB_0585"/>
<dbReference type="PATRIC" id="fig|224326.49.peg.976"/>
<dbReference type="HOGENOM" id="CLU_032540_0_1_12"/>
<dbReference type="OrthoDB" id="9809796at2"/>
<dbReference type="UniPathway" id="UPA00219"/>
<dbReference type="Proteomes" id="UP000001807">
    <property type="component" value="Chromosome"/>
</dbReference>
<dbReference type="GO" id="GO:0005737">
    <property type="term" value="C:cytoplasm"/>
    <property type="evidence" value="ECO:0007669"/>
    <property type="project" value="UniProtKB-SubCell"/>
</dbReference>
<dbReference type="GO" id="GO:0005524">
    <property type="term" value="F:ATP binding"/>
    <property type="evidence" value="ECO:0007669"/>
    <property type="project" value="UniProtKB-UniRule"/>
</dbReference>
<dbReference type="GO" id="GO:0008764">
    <property type="term" value="F:UDP-N-acetylmuramoylalanine-D-glutamate ligase activity"/>
    <property type="evidence" value="ECO:0007669"/>
    <property type="project" value="UniProtKB-UniRule"/>
</dbReference>
<dbReference type="GO" id="GO:0051301">
    <property type="term" value="P:cell division"/>
    <property type="evidence" value="ECO:0007669"/>
    <property type="project" value="UniProtKB-KW"/>
</dbReference>
<dbReference type="GO" id="GO:0071555">
    <property type="term" value="P:cell wall organization"/>
    <property type="evidence" value="ECO:0007669"/>
    <property type="project" value="UniProtKB-KW"/>
</dbReference>
<dbReference type="GO" id="GO:0009252">
    <property type="term" value="P:peptidoglycan biosynthetic process"/>
    <property type="evidence" value="ECO:0007669"/>
    <property type="project" value="UniProtKB-UniRule"/>
</dbReference>
<dbReference type="GO" id="GO:0008360">
    <property type="term" value="P:regulation of cell shape"/>
    <property type="evidence" value="ECO:0007669"/>
    <property type="project" value="UniProtKB-KW"/>
</dbReference>
<dbReference type="Gene3D" id="3.90.190.20">
    <property type="entry name" value="Mur ligase, C-terminal domain"/>
    <property type="match status" value="1"/>
</dbReference>
<dbReference type="Gene3D" id="3.40.1190.10">
    <property type="entry name" value="Mur-like, catalytic domain"/>
    <property type="match status" value="1"/>
</dbReference>
<dbReference type="Gene3D" id="3.40.50.720">
    <property type="entry name" value="NAD(P)-binding Rossmann-like Domain"/>
    <property type="match status" value="1"/>
</dbReference>
<dbReference type="HAMAP" id="MF_00639">
    <property type="entry name" value="MurD"/>
    <property type="match status" value="1"/>
</dbReference>
<dbReference type="InterPro" id="IPR036565">
    <property type="entry name" value="Mur-like_cat_sf"/>
</dbReference>
<dbReference type="InterPro" id="IPR004101">
    <property type="entry name" value="Mur_ligase_C"/>
</dbReference>
<dbReference type="InterPro" id="IPR036615">
    <property type="entry name" value="Mur_ligase_C_dom_sf"/>
</dbReference>
<dbReference type="InterPro" id="IPR013221">
    <property type="entry name" value="Mur_ligase_cen"/>
</dbReference>
<dbReference type="InterPro" id="IPR005762">
    <property type="entry name" value="MurD"/>
</dbReference>
<dbReference type="NCBIfam" id="TIGR01087">
    <property type="entry name" value="murD"/>
    <property type="match status" value="1"/>
</dbReference>
<dbReference type="PANTHER" id="PTHR43692">
    <property type="entry name" value="UDP-N-ACETYLMURAMOYLALANINE--D-GLUTAMATE LIGASE"/>
    <property type="match status" value="1"/>
</dbReference>
<dbReference type="PANTHER" id="PTHR43692:SF1">
    <property type="entry name" value="UDP-N-ACETYLMURAMOYLALANINE--D-GLUTAMATE LIGASE"/>
    <property type="match status" value="1"/>
</dbReference>
<dbReference type="Pfam" id="PF02875">
    <property type="entry name" value="Mur_ligase_C"/>
    <property type="match status" value="1"/>
</dbReference>
<dbReference type="Pfam" id="PF08245">
    <property type="entry name" value="Mur_ligase_M"/>
    <property type="match status" value="1"/>
</dbReference>
<dbReference type="Pfam" id="PF21799">
    <property type="entry name" value="MurD-like_N"/>
    <property type="match status" value="1"/>
</dbReference>
<dbReference type="SUPFAM" id="SSF51984">
    <property type="entry name" value="MurCD N-terminal domain"/>
    <property type="match status" value="1"/>
</dbReference>
<dbReference type="SUPFAM" id="SSF53623">
    <property type="entry name" value="MurD-like peptide ligases, catalytic domain"/>
    <property type="match status" value="1"/>
</dbReference>
<dbReference type="SUPFAM" id="SSF53244">
    <property type="entry name" value="MurD-like peptide ligases, peptide-binding domain"/>
    <property type="match status" value="1"/>
</dbReference>
<reference key="1">
    <citation type="journal article" date="1997" name="Nature">
        <title>Genomic sequence of a Lyme disease spirochaete, Borrelia burgdorferi.</title>
        <authorList>
            <person name="Fraser C.M."/>
            <person name="Casjens S."/>
            <person name="Huang W.M."/>
            <person name="Sutton G.G."/>
            <person name="Clayton R.A."/>
            <person name="Lathigra R."/>
            <person name="White O."/>
            <person name="Ketchum K.A."/>
            <person name="Dodson R.J."/>
            <person name="Hickey E.K."/>
            <person name="Gwinn M.L."/>
            <person name="Dougherty B.A."/>
            <person name="Tomb J.-F."/>
            <person name="Fleischmann R.D."/>
            <person name="Richardson D.L."/>
            <person name="Peterson J.D."/>
            <person name="Kerlavage A.R."/>
            <person name="Quackenbush J."/>
            <person name="Salzberg S.L."/>
            <person name="Hanson M."/>
            <person name="van Vugt R."/>
            <person name="Palmer N."/>
            <person name="Adams M.D."/>
            <person name="Gocayne J.D."/>
            <person name="Weidman J.F."/>
            <person name="Utterback T.R."/>
            <person name="Watthey L."/>
            <person name="McDonald L.A."/>
            <person name="Artiach P."/>
            <person name="Bowman C."/>
            <person name="Garland S.A."/>
            <person name="Fujii C."/>
            <person name="Cotton M.D."/>
            <person name="Horst K."/>
            <person name="Roberts K.M."/>
            <person name="Hatch B."/>
            <person name="Smith H.O."/>
            <person name="Venter J.C."/>
        </authorList>
    </citation>
    <scope>NUCLEOTIDE SEQUENCE [LARGE SCALE GENOMIC DNA]</scope>
    <source>
        <strain>ATCC 35210 / DSM 4680 / CIP 102532 / B31</strain>
    </source>
</reference>
<comment type="function">
    <text evidence="1">Cell wall formation. Catalyzes the addition of glutamate to the nucleotide precursor UDP-N-acetylmuramoyl-L-alanine (UMA).</text>
</comment>
<comment type="catalytic activity">
    <reaction>
        <text>UDP-N-acetyl-alpha-D-muramoyl-L-alanine + D-glutamate + ATP = UDP-N-acetyl-alpha-D-muramoyl-L-alanyl-D-glutamate + ADP + phosphate + H(+)</text>
        <dbReference type="Rhea" id="RHEA:16429"/>
        <dbReference type="ChEBI" id="CHEBI:15378"/>
        <dbReference type="ChEBI" id="CHEBI:29986"/>
        <dbReference type="ChEBI" id="CHEBI:30616"/>
        <dbReference type="ChEBI" id="CHEBI:43474"/>
        <dbReference type="ChEBI" id="CHEBI:83898"/>
        <dbReference type="ChEBI" id="CHEBI:83900"/>
        <dbReference type="ChEBI" id="CHEBI:456216"/>
        <dbReference type="EC" id="6.3.2.9"/>
    </reaction>
</comment>
<comment type="pathway">
    <text>Cell wall biogenesis; peptidoglycan biosynthesis.</text>
</comment>
<comment type="subcellular location">
    <subcellularLocation>
        <location evidence="1">Cytoplasm</location>
    </subcellularLocation>
</comment>
<comment type="similarity">
    <text evidence="3">Belongs to the MurCDEF family.</text>
</comment>
<gene>
    <name type="primary">murD</name>
    <name type="ordered locus">BB_0585</name>
</gene>